<gene>
    <name type="primary">fliD</name>
</gene>
<name>FLID_TREMA</name>
<accession>Q9KWW7</accession>
<feature type="chain" id="PRO_0000177026" description="Flagellar hook-associated protein 2">
    <location>
        <begin position="1"/>
        <end position="673"/>
    </location>
</feature>
<feature type="region of interest" description="Disordered" evidence="3">
    <location>
        <begin position="649"/>
        <end position="673"/>
    </location>
</feature>
<feature type="coiled-coil region" evidence="2">
    <location>
        <begin position="611"/>
        <end position="664"/>
    </location>
</feature>
<feature type="compositionally biased region" description="Polar residues" evidence="3">
    <location>
        <begin position="650"/>
        <end position="673"/>
    </location>
</feature>
<keyword id="KW-0975">Bacterial flagellum</keyword>
<keyword id="KW-0175">Coiled coil</keyword>
<keyword id="KW-0574">Periplasm</keyword>
<organism>
    <name type="scientific">Treponema maltophilum</name>
    <dbReference type="NCBI Taxonomy" id="51160"/>
    <lineage>
        <taxon>Bacteria</taxon>
        <taxon>Pseudomonadati</taxon>
        <taxon>Spirochaetota</taxon>
        <taxon>Spirochaetia</taxon>
        <taxon>Spirochaetales</taxon>
        <taxon>Treponemataceae</taxon>
        <taxon>Treponema</taxon>
    </lineage>
</organism>
<comment type="function">
    <text evidence="1">Required for the morphogenesis and for the elongation of the flagellar filament by facilitating polymerization of the flagellin monomers at the tip of growing filament. Forms a capping structure, which prevents flagellin subunits (transported through the central channel of the flagellum) from leaking out without polymerization at the distal end (By similarity).</text>
</comment>
<comment type="subunit">
    <text evidence="1">Homopentamer.</text>
</comment>
<comment type="subcellular location">
    <subcellularLocation>
        <location>Periplasmic flagellum</location>
    </subcellularLocation>
    <subcellularLocation>
        <location>Periplasm</location>
    </subcellularLocation>
</comment>
<comment type="similarity">
    <text evidence="4">Belongs to the FliD family.</text>
</comment>
<proteinExistence type="inferred from homology"/>
<dbReference type="EMBL" id="Y18889">
    <property type="protein sequence ID" value="CAB67252.1"/>
    <property type="molecule type" value="Genomic_DNA"/>
</dbReference>
<dbReference type="SMR" id="Q9KWW7"/>
<dbReference type="GO" id="GO:0009421">
    <property type="term" value="C:bacterial-type flagellum filament cap"/>
    <property type="evidence" value="ECO:0007669"/>
    <property type="project" value="InterPro"/>
</dbReference>
<dbReference type="GO" id="GO:0009424">
    <property type="term" value="C:bacterial-type flagellum hook"/>
    <property type="evidence" value="ECO:0007669"/>
    <property type="project" value="InterPro"/>
</dbReference>
<dbReference type="GO" id="GO:0055040">
    <property type="term" value="C:periplasmic flagellum"/>
    <property type="evidence" value="ECO:0007669"/>
    <property type="project" value="UniProtKB-SubCell"/>
</dbReference>
<dbReference type="GO" id="GO:0071973">
    <property type="term" value="P:bacterial-type flagellum-dependent cell motility"/>
    <property type="evidence" value="ECO:0007669"/>
    <property type="project" value="TreeGrafter"/>
</dbReference>
<dbReference type="GO" id="GO:0007155">
    <property type="term" value="P:cell adhesion"/>
    <property type="evidence" value="ECO:0007669"/>
    <property type="project" value="InterPro"/>
</dbReference>
<dbReference type="InterPro" id="IPR040026">
    <property type="entry name" value="FliD"/>
</dbReference>
<dbReference type="InterPro" id="IPR010809">
    <property type="entry name" value="FliD_C"/>
</dbReference>
<dbReference type="InterPro" id="IPR003481">
    <property type="entry name" value="FliD_N"/>
</dbReference>
<dbReference type="NCBIfam" id="NF005188">
    <property type="entry name" value="PRK06664.1"/>
    <property type="match status" value="1"/>
</dbReference>
<dbReference type="PANTHER" id="PTHR30288">
    <property type="entry name" value="FLAGELLAR CAP/ASSEMBLY PROTEIN FLID"/>
    <property type="match status" value="1"/>
</dbReference>
<dbReference type="PANTHER" id="PTHR30288:SF0">
    <property type="entry name" value="FLAGELLAR HOOK-ASSOCIATED PROTEIN 2"/>
    <property type="match status" value="1"/>
</dbReference>
<dbReference type="Pfam" id="PF07195">
    <property type="entry name" value="FliD_C"/>
    <property type="match status" value="1"/>
</dbReference>
<dbReference type="Pfam" id="PF02465">
    <property type="entry name" value="FliD_N"/>
    <property type="match status" value="1"/>
</dbReference>
<sequence length="673" mass="73808">MADISIPGVTDKYKTNDLIKNLMEAERVPLTREQKQLETYKTQQETWRNVNTQMTYVRESVRSLYSFDNPFSSKLASSTDEYAVSATPKRDAALESFKVEVLQTATADRFLSAELDAKMQVPAGNYEYAVNDKKVSFNWKGGKLSDFVAALNRRSANTIKASIIGISKDKQALLIESLITGSENRLTFSGAARDFALQTGMIGKAPAAAQDSFTIKRDTIRNADNLNSKTVEFSQDALTVPPRSGFESPIPQKIAAEKTKTIRFNVRAIDIPAEEVLPDKPELPSAGTVSFKDVTLSNEEFDTKLPLSEETEKVPAEPVEDYAAVFVKAADGTEIPLGPLKPNGENTSYSIAASDYPGMSALVIKNNNTHKKIVMTKPETIDMAASSGYIPLNPAETAADAKIKYQGITITRPSNTIDDVVPNVTLNIQAKTEKPATISIEPDKKAAKEALITFVGKYNRLMAELNILTQTKPEIITELEYFTEDEAKAAEKRLGMFQTEFSLANGKRALQTITSGRYPTADDAQITMCRKSGISTSASTSGFTGVSASRLRGYLEIDEKKLDAAPQSNMQDIKNLFGYDSDGDLVIDSGIAFAIDKNLQSFTQIGGIIASKTSTLNTRISSSQKNIETLESKLKRKEQDLKTKYGQMEASLNSLEKQSDSITNFSDNQRSGR</sequence>
<evidence type="ECO:0000250" key="1"/>
<evidence type="ECO:0000255" key="2"/>
<evidence type="ECO:0000256" key="3">
    <source>
        <dbReference type="SAM" id="MobiDB-lite"/>
    </source>
</evidence>
<evidence type="ECO:0000305" key="4"/>
<reference key="1">
    <citation type="journal article" date="2000" name="Microbiology">
        <title>A flagellar gene cluster from the oral spirochaete Treponema maltophilum.</title>
        <authorList>
            <person name="Heuner K."/>
            <person name="Grosse K."/>
            <person name="Schade R."/>
            <person name="Goebel U.B."/>
        </authorList>
    </citation>
    <scope>NUCLEOTIDE SEQUENCE [GENOMIC DNA]</scope>
    <source>
        <strain>ATCC 51939 / DSM 27366 / CIP 105146 / OMZ 679 / BR</strain>
    </source>
</reference>
<protein>
    <recommendedName>
        <fullName>Flagellar hook-associated protein 2</fullName>
        <shortName>HAP2</shortName>
    </recommendedName>
    <alternativeName>
        <fullName>Filament cap protein</fullName>
    </alternativeName>
    <alternativeName>
        <fullName>Flagellar cap protein</fullName>
    </alternativeName>
</protein>